<keyword id="KW-0472">Membrane</keyword>
<keyword id="KW-1185">Reference proteome</keyword>
<keyword id="KW-0812">Transmembrane</keyword>
<keyword id="KW-1133">Transmembrane helix</keyword>
<reference key="1">
    <citation type="journal article" date="2002" name="Nature">
        <title>The genome sequence of Schizosaccharomyces pombe.</title>
        <authorList>
            <person name="Wood V."/>
            <person name="Gwilliam R."/>
            <person name="Rajandream M.A."/>
            <person name="Lyne M.H."/>
            <person name="Lyne R."/>
            <person name="Stewart A."/>
            <person name="Sgouros J.G."/>
            <person name="Peat N."/>
            <person name="Hayles J."/>
            <person name="Baker S.G."/>
            <person name="Basham D."/>
            <person name="Bowman S."/>
            <person name="Brooks K."/>
            <person name="Brown D."/>
            <person name="Brown S."/>
            <person name="Chillingworth T."/>
            <person name="Churcher C.M."/>
            <person name="Collins M."/>
            <person name="Connor R."/>
            <person name="Cronin A."/>
            <person name="Davis P."/>
            <person name="Feltwell T."/>
            <person name="Fraser A."/>
            <person name="Gentles S."/>
            <person name="Goble A."/>
            <person name="Hamlin N."/>
            <person name="Harris D.E."/>
            <person name="Hidalgo J."/>
            <person name="Hodgson G."/>
            <person name="Holroyd S."/>
            <person name="Hornsby T."/>
            <person name="Howarth S."/>
            <person name="Huckle E.J."/>
            <person name="Hunt S."/>
            <person name="Jagels K."/>
            <person name="James K.D."/>
            <person name="Jones L."/>
            <person name="Jones M."/>
            <person name="Leather S."/>
            <person name="McDonald S."/>
            <person name="McLean J."/>
            <person name="Mooney P."/>
            <person name="Moule S."/>
            <person name="Mungall K.L."/>
            <person name="Murphy L.D."/>
            <person name="Niblett D."/>
            <person name="Odell C."/>
            <person name="Oliver K."/>
            <person name="O'Neil S."/>
            <person name="Pearson D."/>
            <person name="Quail M.A."/>
            <person name="Rabbinowitsch E."/>
            <person name="Rutherford K.M."/>
            <person name="Rutter S."/>
            <person name="Saunders D."/>
            <person name="Seeger K."/>
            <person name="Sharp S."/>
            <person name="Skelton J."/>
            <person name="Simmonds M.N."/>
            <person name="Squares R."/>
            <person name="Squares S."/>
            <person name="Stevens K."/>
            <person name="Taylor K."/>
            <person name="Taylor R.G."/>
            <person name="Tivey A."/>
            <person name="Walsh S.V."/>
            <person name="Warren T."/>
            <person name="Whitehead S."/>
            <person name="Woodward J.R."/>
            <person name="Volckaert G."/>
            <person name="Aert R."/>
            <person name="Robben J."/>
            <person name="Grymonprez B."/>
            <person name="Weltjens I."/>
            <person name="Vanstreels E."/>
            <person name="Rieger M."/>
            <person name="Schaefer M."/>
            <person name="Mueller-Auer S."/>
            <person name="Gabel C."/>
            <person name="Fuchs M."/>
            <person name="Duesterhoeft A."/>
            <person name="Fritzc C."/>
            <person name="Holzer E."/>
            <person name="Moestl D."/>
            <person name="Hilbert H."/>
            <person name="Borzym K."/>
            <person name="Langer I."/>
            <person name="Beck A."/>
            <person name="Lehrach H."/>
            <person name="Reinhardt R."/>
            <person name="Pohl T.M."/>
            <person name="Eger P."/>
            <person name="Zimmermann W."/>
            <person name="Wedler H."/>
            <person name="Wambutt R."/>
            <person name="Purnelle B."/>
            <person name="Goffeau A."/>
            <person name="Cadieu E."/>
            <person name="Dreano S."/>
            <person name="Gloux S."/>
            <person name="Lelaure V."/>
            <person name="Mottier S."/>
            <person name="Galibert F."/>
            <person name="Aves S.J."/>
            <person name="Xiang Z."/>
            <person name="Hunt C."/>
            <person name="Moore K."/>
            <person name="Hurst S.M."/>
            <person name="Lucas M."/>
            <person name="Rochet M."/>
            <person name="Gaillardin C."/>
            <person name="Tallada V.A."/>
            <person name="Garzon A."/>
            <person name="Thode G."/>
            <person name="Daga R.R."/>
            <person name="Cruzado L."/>
            <person name="Jimenez J."/>
            <person name="Sanchez M."/>
            <person name="del Rey F."/>
            <person name="Benito J."/>
            <person name="Dominguez A."/>
            <person name="Revuelta J.L."/>
            <person name="Moreno S."/>
            <person name="Armstrong J."/>
            <person name="Forsburg S.L."/>
            <person name="Cerutti L."/>
            <person name="Lowe T."/>
            <person name="McCombie W.R."/>
            <person name="Paulsen I."/>
            <person name="Potashkin J."/>
            <person name="Shpakovski G.V."/>
            <person name="Ussery D."/>
            <person name="Barrell B.G."/>
            <person name="Nurse P."/>
        </authorList>
    </citation>
    <scope>NUCLEOTIDE SEQUENCE [LARGE SCALE GENOMIC DNA]</scope>
    <source>
        <strain>972 / ATCC 24843</strain>
    </source>
</reference>
<protein>
    <recommendedName>
        <fullName>Protein ERD1 homolog 2</fullName>
    </recommendedName>
</protein>
<accession>Q10151</accession>
<comment type="subcellular location">
    <subcellularLocation>
        <location evidence="3">Membrane</location>
        <topology evidence="3">Multi-pass membrane protein</topology>
    </subcellularLocation>
</comment>
<comment type="similarity">
    <text evidence="3">Belongs to the ERD1 family.</text>
</comment>
<sequence>MDLEVVEFPLHHKLALPFRIGLLVIVGTWLWSVCYHLIYILNRYQPISPNPRGSLNSKWYHLLQIPLSNRHTDLEENTEFKANLVSPVDFHAGYCFAAILSISWATGFILFLKKTQGDIGGLYSHPIYPLLWVITAFILIVFPFPWRYRSSQRGLRKSIIRVFLFFQADFRSPYKDFIVSEIFTSYAKALGDFYIFGCVLQGHISKFTLRPDLKCDGTFFVPLAMAYPFIVAILQCLHYGLSRRKHTFKINLLSALKHATALPVIYLSAIIHAKQTKFTLTSGHGYLFWLWILSALLSSAYTFLWDVFIDWRIRFPFHKSINHKRFPMFIYAIGCFINFILRVTWSMKLHPRLHQFHEYEMGIFSFEMLEILRRFLWLFFHLDAISS</sequence>
<dbReference type="EMBL" id="CU329670">
    <property type="protein sequence ID" value="CAA93214.1"/>
    <property type="molecule type" value="Genomic_DNA"/>
</dbReference>
<dbReference type="PIR" id="T38046">
    <property type="entry name" value="T38046"/>
</dbReference>
<dbReference type="SMR" id="Q10151"/>
<dbReference type="FunCoup" id="Q10151">
    <property type="interactions" value="420"/>
</dbReference>
<dbReference type="STRING" id="284812.Q10151"/>
<dbReference type="PaxDb" id="4896-SPAC1D4.05c.1"/>
<dbReference type="EnsemblFungi" id="SPAC1D4.05c.1">
    <property type="protein sequence ID" value="SPAC1D4.05c.1:pep"/>
    <property type="gene ID" value="SPAC1D4.05c"/>
</dbReference>
<dbReference type="KEGG" id="spo:2542527"/>
<dbReference type="PomBase" id="SPAC1D4.05c"/>
<dbReference type="VEuPathDB" id="FungiDB:SPAC1D4.05c"/>
<dbReference type="eggNOG" id="KOG1162">
    <property type="taxonomic scope" value="Eukaryota"/>
</dbReference>
<dbReference type="HOGENOM" id="CLU_024081_2_1_1"/>
<dbReference type="InParanoid" id="Q10151"/>
<dbReference type="OMA" id="VVEFPLH"/>
<dbReference type="PhylomeDB" id="Q10151"/>
<dbReference type="PRO" id="PR:Q10151"/>
<dbReference type="Proteomes" id="UP000002485">
    <property type="component" value="Chromosome I"/>
</dbReference>
<dbReference type="GO" id="GO:0005783">
    <property type="term" value="C:endoplasmic reticulum"/>
    <property type="evidence" value="ECO:0007005"/>
    <property type="project" value="PomBase"/>
</dbReference>
<dbReference type="GO" id="GO:0016020">
    <property type="term" value="C:membrane"/>
    <property type="evidence" value="ECO:0000266"/>
    <property type="project" value="PomBase"/>
</dbReference>
<dbReference type="GO" id="GO:0005802">
    <property type="term" value="C:trans-Golgi network"/>
    <property type="evidence" value="ECO:0000318"/>
    <property type="project" value="GO_Central"/>
</dbReference>
<dbReference type="GO" id="GO:0006621">
    <property type="term" value="P:protein retention in ER lumen"/>
    <property type="evidence" value="ECO:0000266"/>
    <property type="project" value="PomBase"/>
</dbReference>
<dbReference type="InterPro" id="IPR004342">
    <property type="entry name" value="EXS_C"/>
</dbReference>
<dbReference type="PANTHER" id="PTHR10783:SF46">
    <property type="entry name" value="PROTEIN ERD1 HOMOLOG 2"/>
    <property type="match status" value="1"/>
</dbReference>
<dbReference type="PANTHER" id="PTHR10783">
    <property type="entry name" value="XENOTROPIC AND POLYTROPIC RETROVIRUS RECEPTOR 1-RELATED"/>
    <property type="match status" value="1"/>
</dbReference>
<dbReference type="Pfam" id="PF03124">
    <property type="entry name" value="EXS"/>
    <property type="match status" value="1"/>
</dbReference>
<dbReference type="PROSITE" id="PS51380">
    <property type="entry name" value="EXS"/>
    <property type="match status" value="1"/>
</dbReference>
<feature type="chain" id="PRO_0000116469" description="Protein ERD1 homolog 2">
    <location>
        <begin position="1"/>
        <end position="387"/>
    </location>
</feature>
<feature type="transmembrane region" description="Helical" evidence="1">
    <location>
        <begin position="20"/>
        <end position="40"/>
    </location>
</feature>
<feature type="transmembrane region" description="Helical" evidence="1">
    <location>
        <begin position="92"/>
        <end position="112"/>
    </location>
</feature>
<feature type="transmembrane region" description="Helical" evidence="1">
    <location>
        <begin position="126"/>
        <end position="146"/>
    </location>
</feature>
<feature type="transmembrane region" description="Helical" evidence="1">
    <location>
        <begin position="177"/>
        <end position="197"/>
    </location>
</feature>
<feature type="transmembrane region" description="Helical" evidence="1">
    <location>
        <begin position="217"/>
        <end position="237"/>
    </location>
</feature>
<feature type="transmembrane region" description="Helical" evidence="1">
    <location>
        <begin position="252"/>
        <end position="272"/>
    </location>
</feature>
<feature type="transmembrane region" description="Helical" evidence="1">
    <location>
        <begin position="285"/>
        <end position="305"/>
    </location>
</feature>
<feature type="transmembrane region" description="Helical" evidence="1">
    <location>
        <begin position="326"/>
        <end position="346"/>
    </location>
</feature>
<feature type="domain" description="EXS" evidence="2">
    <location>
        <begin position="212"/>
        <end position="387"/>
    </location>
</feature>
<evidence type="ECO:0000255" key="1"/>
<evidence type="ECO:0000255" key="2">
    <source>
        <dbReference type="PROSITE-ProRule" id="PRU00712"/>
    </source>
</evidence>
<evidence type="ECO:0000305" key="3"/>
<name>ERD12_SCHPO</name>
<gene>
    <name type="ORF">SPAC1D4.05c</name>
</gene>
<organism>
    <name type="scientific">Schizosaccharomyces pombe (strain 972 / ATCC 24843)</name>
    <name type="common">Fission yeast</name>
    <dbReference type="NCBI Taxonomy" id="284812"/>
    <lineage>
        <taxon>Eukaryota</taxon>
        <taxon>Fungi</taxon>
        <taxon>Dikarya</taxon>
        <taxon>Ascomycota</taxon>
        <taxon>Taphrinomycotina</taxon>
        <taxon>Schizosaccharomycetes</taxon>
        <taxon>Schizosaccharomycetales</taxon>
        <taxon>Schizosaccharomycetaceae</taxon>
        <taxon>Schizosaccharomyces</taxon>
    </lineage>
</organism>
<proteinExistence type="inferred from homology"/>